<evidence type="ECO:0000255" key="1">
    <source>
        <dbReference type="PROSITE-ProRule" id="PRU01360"/>
    </source>
</evidence>
<evidence type="ECO:0000256" key="2">
    <source>
        <dbReference type="SAM" id="MobiDB-lite"/>
    </source>
</evidence>
<evidence type="ECO:0000269" key="3">
    <source>
    </source>
</evidence>
<evidence type="ECO:0000305" key="4"/>
<name>HGPA_HAEIF</name>
<feature type="signal peptide">
    <location>
        <begin position="1"/>
        <end position="24"/>
    </location>
</feature>
<feature type="chain" id="PRO_0000034778" description="Hemoglobin and hemoglobin-haptoglobin-binding protein A">
    <location>
        <begin position="25"/>
        <end position="1077"/>
    </location>
</feature>
<feature type="repeat" description="1" evidence="3">
    <location>
        <begin position="26"/>
        <end position="29"/>
    </location>
</feature>
<feature type="repeat" description="2" evidence="3">
    <location>
        <begin position="30"/>
        <end position="33"/>
    </location>
</feature>
<feature type="repeat" description="3" evidence="3">
    <location>
        <begin position="34"/>
        <end position="37"/>
    </location>
</feature>
<feature type="repeat" description="4" evidence="3">
    <location>
        <begin position="38"/>
        <end position="41"/>
    </location>
</feature>
<feature type="repeat" description="5" evidence="3">
    <location>
        <begin position="42"/>
        <end position="45"/>
    </location>
</feature>
<feature type="repeat" description="6" evidence="3">
    <location>
        <begin position="46"/>
        <end position="49"/>
    </location>
</feature>
<feature type="repeat" description="7" evidence="3">
    <location>
        <begin position="50"/>
        <end position="53"/>
    </location>
</feature>
<feature type="repeat" description="8" evidence="3">
    <location>
        <begin position="54"/>
        <end position="57"/>
    </location>
</feature>
<feature type="repeat" description="9" evidence="3">
    <location>
        <begin position="58"/>
        <end position="61"/>
    </location>
</feature>
<feature type="repeat" description="10" evidence="3">
    <location>
        <begin position="62"/>
        <end position="65"/>
    </location>
</feature>
<feature type="repeat" description="11" evidence="3">
    <location>
        <begin position="66"/>
        <end position="69"/>
    </location>
</feature>
<feature type="domain" description="TBDR plug" evidence="1">
    <location>
        <begin position="89"/>
        <end position="216"/>
    </location>
</feature>
<feature type="domain" description="TBDR beta-barrel" evidence="1">
    <location>
        <begin position="224"/>
        <end position="1077"/>
    </location>
</feature>
<feature type="region of interest" description="Disordered" evidence="2">
    <location>
        <begin position="25"/>
        <end position="72"/>
    </location>
</feature>
<feature type="region of interest" description="11 X 4 AA tandem repeats of P-T-N-Q">
    <location>
        <begin position="26"/>
        <end position="69"/>
    </location>
</feature>
<feature type="short sequence motif" description="TonB box">
    <location>
        <begin position="78"/>
        <end position="85"/>
    </location>
</feature>
<feature type="short sequence motif" description="TonB C-terminal box">
    <location>
        <begin position="1060"/>
        <end position="1077"/>
    </location>
</feature>
<feature type="compositionally biased region" description="Low complexity" evidence="2">
    <location>
        <begin position="26"/>
        <end position="70"/>
    </location>
</feature>
<dbReference type="EMBL" id="U51922">
    <property type="protein sequence ID" value="AAD10835.1"/>
    <property type="molecule type" value="Genomic_DNA"/>
</dbReference>
<dbReference type="GO" id="GO:0009279">
    <property type="term" value="C:cell outer membrane"/>
    <property type="evidence" value="ECO:0007669"/>
    <property type="project" value="UniProtKB-SubCell"/>
</dbReference>
<dbReference type="GO" id="GO:0015344">
    <property type="term" value="F:siderophore uptake transmembrane transporter activity"/>
    <property type="evidence" value="ECO:0007669"/>
    <property type="project" value="TreeGrafter"/>
</dbReference>
<dbReference type="Gene3D" id="2.40.170.20">
    <property type="entry name" value="TonB-dependent receptor, beta-barrel domain"/>
    <property type="match status" value="2"/>
</dbReference>
<dbReference type="Gene3D" id="2.170.130.10">
    <property type="entry name" value="TonB-dependent receptor, plug domain"/>
    <property type="match status" value="1"/>
</dbReference>
<dbReference type="InterPro" id="IPR012910">
    <property type="entry name" value="Plug_dom"/>
</dbReference>
<dbReference type="InterPro" id="IPR037066">
    <property type="entry name" value="Plug_dom_sf"/>
</dbReference>
<dbReference type="InterPro" id="IPR006970">
    <property type="entry name" value="PT"/>
</dbReference>
<dbReference type="InterPro" id="IPR039426">
    <property type="entry name" value="TonB-dep_rcpt-like"/>
</dbReference>
<dbReference type="InterPro" id="IPR000531">
    <property type="entry name" value="TonB-dep_rcpt_b-brl"/>
</dbReference>
<dbReference type="InterPro" id="IPR010949">
    <property type="entry name" value="TonB_Hb/transfer/lactofer_rcpt"/>
</dbReference>
<dbReference type="InterPro" id="IPR036942">
    <property type="entry name" value="TonB_rcpt_b-brl_sf"/>
</dbReference>
<dbReference type="InterPro" id="IPR010917">
    <property type="entry name" value="TonB_rcpt_CS"/>
</dbReference>
<dbReference type="NCBIfam" id="TIGR01786">
    <property type="entry name" value="TonB-hemlactrns"/>
    <property type="match status" value="1"/>
</dbReference>
<dbReference type="PANTHER" id="PTHR30069:SF29">
    <property type="entry name" value="HEMOGLOBIN AND HEMOGLOBIN-HAPTOGLOBIN-BINDING PROTEIN 1-RELATED"/>
    <property type="match status" value="1"/>
</dbReference>
<dbReference type="PANTHER" id="PTHR30069">
    <property type="entry name" value="TONB-DEPENDENT OUTER MEMBRANE RECEPTOR"/>
    <property type="match status" value="1"/>
</dbReference>
<dbReference type="Pfam" id="PF07715">
    <property type="entry name" value="Plug"/>
    <property type="match status" value="1"/>
</dbReference>
<dbReference type="Pfam" id="PF04886">
    <property type="entry name" value="PT"/>
    <property type="match status" value="2"/>
</dbReference>
<dbReference type="Pfam" id="PF00593">
    <property type="entry name" value="TonB_dep_Rec_b-barrel"/>
    <property type="match status" value="1"/>
</dbReference>
<dbReference type="SUPFAM" id="SSF56935">
    <property type="entry name" value="Porins"/>
    <property type="match status" value="1"/>
</dbReference>
<dbReference type="PROSITE" id="PS01156">
    <property type="entry name" value="TONB_DEPENDENT_REC_2"/>
    <property type="match status" value="1"/>
</dbReference>
<dbReference type="PROSITE" id="PS52016">
    <property type="entry name" value="TONB_DEPENDENT_REC_3"/>
    <property type="match status" value="1"/>
</dbReference>
<gene>
    <name type="primary">hgpA</name>
</gene>
<organism>
    <name type="scientific">Haemophilus influenzae</name>
    <dbReference type="NCBI Taxonomy" id="727"/>
    <lineage>
        <taxon>Bacteria</taxon>
        <taxon>Pseudomonadati</taxon>
        <taxon>Pseudomonadota</taxon>
        <taxon>Gammaproteobacteria</taxon>
        <taxon>Pasteurellales</taxon>
        <taxon>Pasteurellaceae</taxon>
        <taxon>Haemophilus</taxon>
    </lineage>
</organism>
<reference key="1">
    <citation type="journal article" date="1999" name="Microbiology">
        <title>Characterization of hgpA, a gene encoding a haemoglobin/haemoglobin-haptoglobin-binding protein of Haemophilus influenzae.</title>
        <authorList>
            <person name="Jin H."/>
            <person name="Ren Z."/>
            <person name="Whitby P.W."/>
            <person name="Morton D.J."/>
            <person name="Stull T.L."/>
        </authorList>
    </citation>
    <scope>NUCLEOTIDE SEQUENCE [GENOMIC DNA]</scope>
    <source>
        <strain>HI689 / Serotype B</strain>
    </source>
</reference>
<reference key="2">
    <citation type="journal article" date="1996" name="Infect. Immun.">
        <title>Cloning of a DNA fragment encoding a heme-repressible hemoglobin-binding outer membrane protein from Haemophilus influenzae.</title>
        <authorList>
            <person name="Jin H."/>
            <person name="Ren Z."/>
            <person name="Pozsgay J.M."/>
            <person name="Elkins C."/>
            <person name="Whitby P.W."/>
            <person name="Morton D.J."/>
            <person name="Stull T.L."/>
        </authorList>
    </citation>
    <scope>NUCLEOTIDE SEQUENCE [GENOMIC DNA] OF 1-145 AND 988-1077</scope>
    <scope>PARTIAL PROTEIN SEQUENCE</scope>
    <source>
        <strain>HI689 / Serotype B</strain>
    </source>
</reference>
<reference key="3">
    <citation type="journal article" date="1999" name="J. Bacteriol.">
        <title>Role of CCAA nucleotide repeats in regulation of hemoglobin and hemoglobin-haptoglobin binding protein genes of Haemophilus influenzae.</title>
        <authorList>
            <person name="Ren Z."/>
            <person name="Jin H."/>
            <person name="Whitby P.W."/>
            <person name="Morton D.J."/>
            <person name="Stull T.L."/>
        </authorList>
    </citation>
    <scope>ROLE OF CCAA NUCLEOTIDE REPEATS</scope>
</reference>
<accession>Q9ZA21</accession>
<accession>Q9R649</accession>
<proteinExistence type="evidence at protein level"/>
<comment type="function">
    <text>Acts as a receptor for hemoglobin or the hemoglobin/haptoglobin complex of the human host and is required for heme uptake.</text>
</comment>
<comment type="subcellular location">
    <subcellularLocation>
        <location evidence="1">Cell outer membrane</location>
        <topology evidence="1">Multi-pass membrane protein</topology>
    </subcellularLocation>
</comment>
<comment type="miscellaneous">
    <text>This protein is subject to phase-variable expression associated with alteration in the length of the CCAA repeat region. This mechanism is called slipped-strand mispairing. Addition or loss of CCAA repeat units would change the reading frame and result in introduction of stop codons downstream of the repeat region. This may be a mechanism of regulation and a way to avoid the immunological response of the host.</text>
</comment>
<comment type="similarity">
    <text evidence="4">Belongs to the TonB-dependent receptor family. Hemoglobin/haptoglobin binding protein subfamily.</text>
</comment>
<protein>
    <recommendedName>
        <fullName>Hemoglobin and hemoglobin-haptoglobin-binding protein A</fullName>
    </recommendedName>
    <alternativeName>
        <fullName>Heme-repressible hemoglobin-binding protein</fullName>
        <shortName>Hgb</shortName>
    </alternativeName>
</protein>
<sequence>MTNFRLNVLAYSVMLGLTASVAYAEPTNQPTNQPTNQPTNQPTNQPTNQPTNQPTNQPTNQPTNQPTNQNSNASEQLEQINVSGSTENTDTKAPPKIAETVKTAKKLEKEQAQDVKDLVRYETGITVVEAGRFGNSGFAVRGVEENRVAVQIDGLHQAETISSQGFKELFEGYGNFNNTRNSAEIETLKQVTIRKGADSLKSGSGALGGSVSLDTKDARDYLLNKNYYASYKRGYNTADNQNLNTLTLGGRYKYFDAIAVLTSRKGHELENFGYKNYNDKIQGKTREKADPYRRTQDSALLKIGFQPTENHRFSVVADLYKQTSKGHDFSYTLKPNTQYMTYDEKELRHTNDKVERKNIAFVYENFTETPFWDTLKITYSHQKITTSARTDDYCDGNDKCALAGNPLGMKYNQDNQLVGKDGKSAKYQDINKTQVIKERLPFTKPNGRWRFHKVDWDALKKKYPGVPIYASCLEEDNDPSEFCTYEVKTTKKENTFEINGKRYDLLSEADKNVISDEQRLPTNVSYLFSCDGLNCDKKTILGFKKRRNLLKIFLFEVIEKRCQKYGKTKVKANDQLSGPYLFMPNKKGYQANLWSQRDLTSETKQINLDLTKHLELGKTQHDLSYGGLWSEMEKSMTNLAGDTPLNVKWWAQYPHNCATFLPPSTMTPNAKPTLNPERTSTLCNNVNVFSFLIPVKTKTGALYFINDFRVNNYVAFNLGYRYDRVKYEPEYIPGKTPKIPDDMVTNLYIKTPEFDASKADSDPDELSKKEANAAANIKEIAQPKKFSASSYSFGTTLDPLNWLRLQAKYSKGFRAPTSDEIYFTFKHPDFSIQPNRDLQPETAKTKELSLTVHNDMGYITTSVFDTRYQNFIDLSYQGRRDVHGHSKLIPFHFYQNVNRPNAKVTGFEIASQISLGNITKLFNGFSLSYKYTYQKGRINGNIPMNAIQPRTAVYGVSYVHPDDKYGLDLYISHASAKNAEDTYNMFYKEEGKTDSTIKWRSKSYTTIDLLGYIKPIKNLTLRAGVYNLTNRKYITWDSARSIRPFGTSNMINQDTGLGINRFYAPERNYRMSVQFEF</sequence>
<keyword id="KW-0998">Cell outer membrane</keyword>
<keyword id="KW-0903">Direct protein sequencing</keyword>
<keyword id="KW-0472">Membrane</keyword>
<keyword id="KW-0675">Receptor</keyword>
<keyword id="KW-0677">Repeat</keyword>
<keyword id="KW-0732">Signal</keyword>
<keyword id="KW-0798">TonB box</keyword>
<keyword id="KW-0812">Transmembrane</keyword>
<keyword id="KW-1134">Transmembrane beta strand</keyword>
<keyword id="KW-0813">Transport</keyword>